<accession>Q08B53</accession>
<sequence length="442" mass="46721">MMEESGIETTPPSTPPPSTIGTSVAASTSAIFTPVPPVLSSPLAAPAFSPLPSFAQSSFSTPVPSSVPPLRTSVPLTYASPLPVTSVYSPPANTSVSAAFSSPLPAFSSPPSFPPPPLNTTPGPVLTAPPMNPPVGGFSMSSTYDITKGHAGRAPQTPLMPTYSAAPVTVLPNPVVQAPIAGIGSSITFPEEPEDPRVHTMHDEGSAGGIWGFIKGVAGNPMVKSVLDKTKHSMETVITTLDPGMASYIRTGGELDIVVTSIKEVKVSAVRDAFQEVFGMAVVSGEDGQSNIAPQPVGYAAGLKGAQERIDSLRRTGMIHEKQPAVSVENFIAELLPDKWFDIGCVIMDDPVHGIRLEAFTQATPVPLEYVQQAQNLTPQDYNLRWSGLSVTVGEVLERSLAHVSRTDWHVAFTGMSRRQMIYSATKALAGMYKQRLSPRIL</sequence>
<dbReference type="EMBL" id="BC124873">
    <property type="protein sequence ID" value="AAI24874.1"/>
    <property type="molecule type" value="mRNA"/>
</dbReference>
<dbReference type="RefSeq" id="NP_001121267.1">
    <property type="nucleotide sequence ID" value="NM_001127795.1"/>
</dbReference>
<dbReference type="SMR" id="Q08B53"/>
<dbReference type="DNASU" id="100158349"/>
<dbReference type="GeneID" id="100158349"/>
<dbReference type="KEGG" id="xla:100158349"/>
<dbReference type="AGR" id="Xenbase:XB-GENE-6252936"/>
<dbReference type="CTD" id="100158349"/>
<dbReference type="Xenbase" id="XB-GENE-6252936">
    <property type="gene designation" value="prrc1.L"/>
</dbReference>
<dbReference type="OrthoDB" id="4968544at2759"/>
<dbReference type="Proteomes" id="UP000186698">
    <property type="component" value="Chromosome 1L"/>
</dbReference>
<dbReference type="Bgee" id="100158349">
    <property type="expression patterns" value="Expressed in egg cell and 19 other cell types or tissues"/>
</dbReference>
<dbReference type="GO" id="GO:0005737">
    <property type="term" value="C:cytoplasm"/>
    <property type="evidence" value="ECO:0000250"/>
    <property type="project" value="UniProtKB"/>
</dbReference>
<dbReference type="GO" id="GO:0005794">
    <property type="term" value="C:Golgi apparatus"/>
    <property type="evidence" value="ECO:0000250"/>
    <property type="project" value="UniProtKB"/>
</dbReference>
<dbReference type="GO" id="GO:0034237">
    <property type="term" value="F:protein kinase A regulatory subunit binding"/>
    <property type="evidence" value="ECO:0000318"/>
    <property type="project" value="GO_Central"/>
</dbReference>
<dbReference type="GO" id="GO:0010669">
    <property type="term" value="P:epithelial structure maintenance"/>
    <property type="evidence" value="ECO:0000318"/>
    <property type="project" value="GO_Central"/>
</dbReference>
<dbReference type="FunFam" id="3.90.950.10:FF:000006">
    <property type="entry name" value="PRRC1 isoform 1"/>
    <property type="match status" value="1"/>
</dbReference>
<dbReference type="Gene3D" id="3.90.950.10">
    <property type="match status" value="1"/>
</dbReference>
<dbReference type="InterPro" id="IPR029001">
    <property type="entry name" value="ITPase-like_fam"/>
</dbReference>
<dbReference type="InterPro" id="IPR026533">
    <property type="entry name" value="NTPase/PRRC1"/>
</dbReference>
<dbReference type="InterPro" id="IPR026534">
    <property type="entry name" value="PRRC1"/>
</dbReference>
<dbReference type="PANTHER" id="PTHR23276">
    <property type="entry name" value="PROTEIN PRRC1"/>
    <property type="match status" value="1"/>
</dbReference>
<dbReference type="PANTHER" id="PTHR23276:SF2">
    <property type="entry name" value="PROTEIN PRRC1"/>
    <property type="match status" value="1"/>
</dbReference>
<dbReference type="Pfam" id="PF01931">
    <property type="entry name" value="NTPase_I-T"/>
    <property type="match status" value="1"/>
</dbReference>
<dbReference type="SUPFAM" id="SSF52972">
    <property type="entry name" value="ITPase-like"/>
    <property type="match status" value="1"/>
</dbReference>
<organism>
    <name type="scientific">Xenopus laevis</name>
    <name type="common">African clawed frog</name>
    <dbReference type="NCBI Taxonomy" id="8355"/>
    <lineage>
        <taxon>Eukaryota</taxon>
        <taxon>Metazoa</taxon>
        <taxon>Chordata</taxon>
        <taxon>Craniata</taxon>
        <taxon>Vertebrata</taxon>
        <taxon>Euteleostomi</taxon>
        <taxon>Amphibia</taxon>
        <taxon>Batrachia</taxon>
        <taxon>Anura</taxon>
        <taxon>Pipoidea</taxon>
        <taxon>Pipidae</taxon>
        <taxon>Xenopodinae</taxon>
        <taxon>Xenopus</taxon>
        <taxon>Xenopus</taxon>
    </lineage>
</organism>
<name>PRRCB_XENLA</name>
<protein>
    <recommendedName>
        <fullName>Protein PRRC1-B</fullName>
    </recommendedName>
    <alternativeName>
        <fullName>Proline-rich and coiled-coil-containing protein 1-B</fullName>
    </alternativeName>
</protein>
<proteinExistence type="evidence at transcript level"/>
<gene>
    <name type="primary">prrc1-b</name>
</gene>
<keyword id="KW-0333">Golgi apparatus</keyword>
<keyword id="KW-1185">Reference proteome</keyword>
<comment type="subcellular location">
    <subcellularLocation>
        <location evidence="1">Golgi apparatus</location>
    </subcellularLocation>
</comment>
<comment type="similarity">
    <text evidence="3">Belongs to the PRRC1 family.</text>
</comment>
<reference key="1">
    <citation type="submission" date="2006-10" db="EMBL/GenBank/DDBJ databases">
        <authorList>
            <consortium name="NIH - Xenopus Gene Collection (XGC) project"/>
        </authorList>
    </citation>
    <scope>NUCLEOTIDE SEQUENCE [LARGE SCALE MRNA]</scope>
    <source>
        <tissue>Fat body</tissue>
    </source>
</reference>
<evidence type="ECO:0000250" key="1"/>
<evidence type="ECO:0000256" key="2">
    <source>
        <dbReference type="SAM" id="MobiDB-lite"/>
    </source>
</evidence>
<evidence type="ECO:0000305" key="3"/>
<feature type="chain" id="PRO_0000307344" description="Protein PRRC1-B">
    <location>
        <begin position="1"/>
        <end position="442"/>
    </location>
</feature>
<feature type="region of interest" description="Disordered" evidence="2">
    <location>
        <begin position="1"/>
        <end position="24"/>
    </location>
</feature>